<dbReference type="EC" id="2.1.1.61" evidence="1"/>
<dbReference type="EC" id="1.5.-.-" evidence="1"/>
<dbReference type="EMBL" id="CP000851">
    <property type="protein sequence ID" value="ABV86930.1"/>
    <property type="molecule type" value="Genomic_DNA"/>
</dbReference>
<dbReference type="RefSeq" id="WP_012154854.1">
    <property type="nucleotide sequence ID" value="NC_009901.1"/>
</dbReference>
<dbReference type="SMR" id="A8H2Z3"/>
<dbReference type="STRING" id="398579.Spea_1605"/>
<dbReference type="KEGG" id="spl:Spea_1605"/>
<dbReference type="eggNOG" id="COG0665">
    <property type="taxonomic scope" value="Bacteria"/>
</dbReference>
<dbReference type="HOGENOM" id="CLU_022427_2_1_6"/>
<dbReference type="OrthoDB" id="9786494at2"/>
<dbReference type="Proteomes" id="UP000002608">
    <property type="component" value="Chromosome"/>
</dbReference>
<dbReference type="GO" id="GO:0005737">
    <property type="term" value="C:cytoplasm"/>
    <property type="evidence" value="ECO:0007669"/>
    <property type="project" value="UniProtKB-SubCell"/>
</dbReference>
<dbReference type="GO" id="GO:0050660">
    <property type="term" value="F:flavin adenine dinucleotide binding"/>
    <property type="evidence" value="ECO:0007669"/>
    <property type="project" value="UniProtKB-UniRule"/>
</dbReference>
<dbReference type="GO" id="GO:0016645">
    <property type="term" value="F:oxidoreductase activity, acting on the CH-NH group of donors"/>
    <property type="evidence" value="ECO:0007669"/>
    <property type="project" value="InterPro"/>
</dbReference>
<dbReference type="GO" id="GO:0004808">
    <property type="term" value="F:tRNA (5-methylaminomethyl-2-thiouridylate)(34)-methyltransferase activity"/>
    <property type="evidence" value="ECO:0007669"/>
    <property type="project" value="UniProtKB-EC"/>
</dbReference>
<dbReference type="GO" id="GO:0032259">
    <property type="term" value="P:methylation"/>
    <property type="evidence" value="ECO:0007669"/>
    <property type="project" value="UniProtKB-KW"/>
</dbReference>
<dbReference type="GO" id="GO:0002098">
    <property type="term" value="P:tRNA wobble uridine modification"/>
    <property type="evidence" value="ECO:0007669"/>
    <property type="project" value="TreeGrafter"/>
</dbReference>
<dbReference type="Gene3D" id="3.30.9.10">
    <property type="entry name" value="D-Amino Acid Oxidase, subunit A, domain 2"/>
    <property type="match status" value="1"/>
</dbReference>
<dbReference type="Gene3D" id="3.50.50.60">
    <property type="entry name" value="FAD/NAD(P)-binding domain"/>
    <property type="match status" value="1"/>
</dbReference>
<dbReference type="HAMAP" id="MF_01102">
    <property type="entry name" value="MnmC"/>
    <property type="match status" value="1"/>
</dbReference>
<dbReference type="InterPro" id="IPR006076">
    <property type="entry name" value="FAD-dep_OxRdtase"/>
</dbReference>
<dbReference type="InterPro" id="IPR036188">
    <property type="entry name" value="FAD/NAD-bd_sf"/>
</dbReference>
<dbReference type="InterPro" id="IPR023032">
    <property type="entry name" value="tRNA_MAMT_biosynth_bifunc_MnmC"/>
</dbReference>
<dbReference type="InterPro" id="IPR017610">
    <property type="entry name" value="tRNA_S-uridine_synth_MnmC_C"/>
</dbReference>
<dbReference type="NCBIfam" id="TIGR03197">
    <property type="entry name" value="MnmC_Cterm"/>
    <property type="match status" value="1"/>
</dbReference>
<dbReference type="PANTHER" id="PTHR13847">
    <property type="entry name" value="SARCOSINE DEHYDROGENASE-RELATED"/>
    <property type="match status" value="1"/>
</dbReference>
<dbReference type="PANTHER" id="PTHR13847:SF283">
    <property type="entry name" value="TRNA 5-METHYLAMINOMETHYL-2-THIOURIDINE BIOSYNTHESIS BIFUNCTIONAL PROTEIN MNMC"/>
    <property type="match status" value="1"/>
</dbReference>
<dbReference type="Pfam" id="PF01266">
    <property type="entry name" value="DAO"/>
    <property type="match status" value="1"/>
</dbReference>
<dbReference type="SUPFAM" id="SSF51905">
    <property type="entry name" value="FAD/NAD(P)-binding domain"/>
    <property type="match status" value="1"/>
</dbReference>
<reference key="1">
    <citation type="submission" date="2007-10" db="EMBL/GenBank/DDBJ databases">
        <title>Complete sequence of Shewanella pealeana ATCC 700345.</title>
        <authorList>
            <consortium name="US DOE Joint Genome Institute"/>
            <person name="Copeland A."/>
            <person name="Lucas S."/>
            <person name="Lapidus A."/>
            <person name="Barry K."/>
            <person name="Glavina del Rio T."/>
            <person name="Dalin E."/>
            <person name="Tice H."/>
            <person name="Pitluck S."/>
            <person name="Chertkov O."/>
            <person name="Brettin T."/>
            <person name="Bruce D."/>
            <person name="Detter J.C."/>
            <person name="Han C."/>
            <person name="Schmutz J."/>
            <person name="Larimer F."/>
            <person name="Land M."/>
            <person name="Hauser L."/>
            <person name="Kyrpides N."/>
            <person name="Kim E."/>
            <person name="Zhao J.-S.Z."/>
            <person name="Manno D."/>
            <person name="Hawari J."/>
            <person name="Richardson P."/>
        </authorList>
    </citation>
    <scope>NUCLEOTIDE SEQUENCE [LARGE SCALE GENOMIC DNA]</scope>
    <source>
        <strain>ATCC 700345 / ANG-SQ1</strain>
    </source>
</reference>
<accession>A8H2Z3</accession>
<evidence type="ECO:0000255" key="1">
    <source>
        <dbReference type="HAMAP-Rule" id="MF_01102"/>
    </source>
</evidence>
<keyword id="KW-0963">Cytoplasm</keyword>
<keyword id="KW-0274">FAD</keyword>
<keyword id="KW-0285">Flavoprotein</keyword>
<keyword id="KW-0489">Methyltransferase</keyword>
<keyword id="KW-0511">Multifunctional enzyme</keyword>
<keyword id="KW-0560">Oxidoreductase</keyword>
<keyword id="KW-1185">Reference proteome</keyword>
<keyword id="KW-0949">S-adenosyl-L-methionine</keyword>
<keyword id="KW-0808">Transferase</keyword>
<keyword id="KW-0819">tRNA processing</keyword>
<gene>
    <name evidence="1" type="primary">mnmC</name>
    <name type="ordered locus">Spea_1605</name>
</gene>
<protein>
    <recommendedName>
        <fullName evidence="1">tRNA 5-methylaminomethyl-2-thiouridine biosynthesis bifunctional protein MnmC</fullName>
        <shortName evidence="1">tRNA mnm(5)s(2)U biosynthesis bifunctional protein</shortName>
    </recommendedName>
    <domain>
        <recommendedName>
            <fullName evidence="1">tRNA (mnm(5)s(2)U34)-methyltransferase</fullName>
            <ecNumber evidence="1">2.1.1.61</ecNumber>
        </recommendedName>
    </domain>
    <domain>
        <recommendedName>
            <fullName evidence="1">FAD-dependent cmnm(5)s(2)U34 oxidoreductase</fullName>
            <ecNumber evidence="1">1.5.-.-</ecNumber>
        </recommendedName>
    </domain>
</protein>
<organism>
    <name type="scientific">Shewanella pealeana (strain ATCC 700345 / ANG-SQ1)</name>
    <dbReference type="NCBI Taxonomy" id="398579"/>
    <lineage>
        <taxon>Bacteria</taxon>
        <taxon>Pseudomonadati</taxon>
        <taxon>Pseudomonadota</taxon>
        <taxon>Gammaproteobacteria</taxon>
        <taxon>Alteromonadales</taxon>
        <taxon>Shewanellaceae</taxon>
        <taxon>Shewanella</taxon>
    </lineage>
</organism>
<name>MNMC_SHEPA</name>
<feature type="chain" id="PRO_0000348031" description="tRNA 5-methylaminomethyl-2-thiouridine biosynthesis bifunctional protein MnmC">
    <location>
        <begin position="1"/>
        <end position="641"/>
    </location>
</feature>
<feature type="region of interest" description="tRNA (mnm(5)s(2)U34)-methyltransferase">
    <location>
        <begin position="1"/>
        <end position="219"/>
    </location>
</feature>
<feature type="region of interest" description="FAD-dependent cmnm(5)s(2)U34 oxidoreductase">
    <location>
        <begin position="232"/>
        <end position="641"/>
    </location>
</feature>
<proteinExistence type="inferred from homology"/>
<comment type="function">
    <text evidence="1">Catalyzes the last two steps in the biosynthesis of 5-methylaminomethyl-2-thiouridine (mnm(5)s(2)U) at the wobble position (U34) in tRNA. Catalyzes the FAD-dependent demodification of cmnm(5)s(2)U34 to nm(5)s(2)U34, followed by the transfer of a methyl group from S-adenosyl-L-methionine to nm(5)s(2)U34, to form mnm(5)s(2)U34.</text>
</comment>
<comment type="catalytic activity">
    <reaction evidence="1">
        <text>5-aminomethyl-2-thiouridine(34) in tRNA + S-adenosyl-L-methionine = 5-methylaminomethyl-2-thiouridine(34) in tRNA + S-adenosyl-L-homocysteine + H(+)</text>
        <dbReference type="Rhea" id="RHEA:19569"/>
        <dbReference type="Rhea" id="RHEA-COMP:10195"/>
        <dbReference type="Rhea" id="RHEA-COMP:10197"/>
        <dbReference type="ChEBI" id="CHEBI:15378"/>
        <dbReference type="ChEBI" id="CHEBI:57856"/>
        <dbReference type="ChEBI" id="CHEBI:59789"/>
        <dbReference type="ChEBI" id="CHEBI:74454"/>
        <dbReference type="ChEBI" id="CHEBI:74455"/>
        <dbReference type="EC" id="2.1.1.61"/>
    </reaction>
</comment>
<comment type="cofactor">
    <cofactor evidence="1">
        <name>FAD</name>
        <dbReference type="ChEBI" id="CHEBI:57692"/>
    </cofactor>
</comment>
<comment type="subcellular location">
    <subcellularLocation>
        <location evidence="1">Cytoplasm</location>
    </subcellularLocation>
</comment>
<comment type="similarity">
    <text evidence="1">In the N-terminal section; belongs to the methyltransferase superfamily. tRNA (mnm(5)s(2)U34)-methyltransferase family.</text>
</comment>
<comment type="similarity">
    <text evidence="1">In the C-terminal section; belongs to the DAO family.</text>
</comment>
<sequence>MTVSKILKQIIDSQTTKNVVIGQLGLGSITKLKQLITLLAHHKDKQLTLKLFVDISDTSGILLANEELTTLLCPQGSISLTAIEGCQRVIVSNCKLTIDFYLGQYLTQLQALPMVNDGFVDGWHVTSDADQTQLRQILFWQLAKLSKNDAQFSLDDTFTEVSQLELYTQAEQVGLYRYADNIPGNIQSGDEICFQERAAMRAQSRALQAPYPICSAAVTTHATCSNLGIAIIGGGVASACLALSLAERGQQVTLFCEDHALAQAASGNKQGAIYPLLTPDNNTLSQYFQQAYLFSLQRLKSLAAQGHPIDFDLCGVVHTGHDERSRKRVAKIINGQNWQPSIARAITAEQASSIAGLKIDDGGIFYPMGGWVSPQDFTRAAFNQAKAIAGASLKLNTQITDIHYKDGGWELTSNTERFGSFKALILANGKSITQFPQTQYLQATGFRGQVSHVPSRAKLSKLSSVLCAHGYMTPSNNTLHCLGASYVKNAPNTDYCPNEQVENLHKIQHSYVGQEWVEDIDVSGHSARVGVRMVTRDHAPMMGPAPDIDSIMTLYQDHQLTPQSRKYWQSHNAPVHQGLYVLGGLGSRGLSSGPLAAESLAAQICGDLMPISRDFVALLNPNRMWMRKLLKGKALEVGVEV</sequence>